<reference key="1">
    <citation type="journal article" date="2009" name="PLoS Genet.">
        <title>Organised genome dynamics in the Escherichia coli species results in highly diverse adaptive paths.</title>
        <authorList>
            <person name="Touchon M."/>
            <person name="Hoede C."/>
            <person name="Tenaillon O."/>
            <person name="Barbe V."/>
            <person name="Baeriswyl S."/>
            <person name="Bidet P."/>
            <person name="Bingen E."/>
            <person name="Bonacorsi S."/>
            <person name="Bouchier C."/>
            <person name="Bouvet O."/>
            <person name="Calteau A."/>
            <person name="Chiapello H."/>
            <person name="Clermont O."/>
            <person name="Cruveiller S."/>
            <person name="Danchin A."/>
            <person name="Diard M."/>
            <person name="Dossat C."/>
            <person name="Karoui M.E."/>
            <person name="Frapy E."/>
            <person name="Garry L."/>
            <person name="Ghigo J.M."/>
            <person name="Gilles A.M."/>
            <person name="Johnson J."/>
            <person name="Le Bouguenec C."/>
            <person name="Lescat M."/>
            <person name="Mangenot S."/>
            <person name="Martinez-Jehanne V."/>
            <person name="Matic I."/>
            <person name="Nassif X."/>
            <person name="Oztas S."/>
            <person name="Petit M.A."/>
            <person name="Pichon C."/>
            <person name="Rouy Z."/>
            <person name="Ruf C.S."/>
            <person name="Schneider D."/>
            <person name="Tourret J."/>
            <person name="Vacherie B."/>
            <person name="Vallenet D."/>
            <person name="Medigue C."/>
            <person name="Rocha E.P.C."/>
            <person name="Denamur E."/>
        </authorList>
    </citation>
    <scope>NUCLEOTIDE SEQUENCE [LARGE SCALE GENOMIC DNA]</scope>
    <source>
        <strain>ED1a</strain>
    </source>
</reference>
<keyword id="KW-0963">Cytoplasm</keyword>
<keyword id="KW-0227">DNA damage</keyword>
<keyword id="KW-0234">DNA repair</keyword>
<keyword id="KW-0255">Endonuclease</keyword>
<keyword id="KW-0378">Hydrolase</keyword>
<keyword id="KW-0460">Magnesium</keyword>
<keyword id="KW-0479">Metal-binding</keyword>
<keyword id="KW-0540">Nuclease</keyword>
<feature type="chain" id="PRO_1000148535" description="Endonuclease V">
    <location>
        <begin position="1"/>
        <end position="223"/>
    </location>
</feature>
<feature type="binding site" evidence="1">
    <location>
        <position position="35"/>
    </location>
    <ligand>
        <name>Mg(2+)</name>
        <dbReference type="ChEBI" id="CHEBI:18420"/>
    </ligand>
</feature>
<feature type="binding site" evidence="1">
    <location>
        <position position="103"/>
    </location>
    <ligand>
        <name>Mg(2+)</name>
        <dbReference type="ChEBI" id="CHEBI:18420"/>
    </ligand>
</feature>
<feature type="site" description="Interaction with target DNA" evidence="1">
    <location>
        <position position="73"/>
    </location>
</feature>
<gene>
    <name evidence="1" type="primary">nfi</name>
    <name type="ordered locus">ECED1_4705</name>
</gene>
<organism>
    <name type="scientific">Escherichia coli O81 (strain ED1a)</name>
    <dbReference type="NCBI Taxonomy" id="585397"/>
    <lineage>
        <taxon>Bacteria</taxon>
        <taxon>Pseudomonadati</taxon>
        <taxon>Pseudomonadota</taxon>
        <taxon>Gammaproteobacteria</taxon>
        <taxon>Enterobacterales</taxon>
        <taxon>Enterobacteriaceae</taxon>
        <taxon>Escherichia</taxon>
    </lineage>
</organism>
<comment type="function">
    <text evidence="1">DNA repair enzyme involved in the repair of deaminated bases. Selectively cleaves double-stranded DNA at the second phosphodiester bond 3' to a deoxyinosine leaving behind the intact lesion on the nicked DNA.</text>
</comment>
<comment type="catalytic activity">
    <reaction evidence="1">
        <text>Endonucleolytic cleavage at apurinic or apyrimidinic sites to products with a 5'-phosphate.</text>
        <dbReference type="EC" id="3.1.21.7"/>
    </reaction>
</comment>
<comment type="cofactor">
    <cofactor evidence="1">
        <name>Mg(2+)</name>
        <dbReference type="ChEBI" id="CHEBI:18420"/>
    </cofactor>
</comment>
<comment type="subcellular location">
    <subcellularLocation>
        <location evidence="1">Cytoplasm</location>
    </subcellularLocation>
</comment>
<comment type="similarity">
    <text evidence="1">Belongs to the endonuclease V family.</text>
</comment>
<dbReference type="EC" id="3.1.21.7" evidence="1"/>
<dbReference type="EMBL" id="CU928162">
    <property type="protein sequence ID" value="CAR10669.1"/>
    <property type="molecule type" value="Genomic_DNA"/>
</dbReference>
<dbReference type="RefSeq" id="WP_000362388.1">
    <property type="nucleotide sequence ID" value="NC_011745.1"/>
</dbReference>
<dbReference type="SMR" id="B7N2K0"/>
<dbReference type="GeneID" id="75169444"/>
<dbReference type="KEGG" id="ecq:ECED1_4705"/>
<dbReference type="HOGENOM" id="CLU_047631_1_0_6"/>
<dbReference type="Proteomes" id="UP000000748">
    <property type="component" value="Chromosome"/>
</dbReference>
<dbReference type="GO" id="GO:0005737">
    <property type="term" value="C:cytoplasm"/>
    <property type="evidence" value="ECO:0007669"/>
    <property type="project" value="UniProtKB-SubCell"/>
</dbReference>
<dbReference type="GO" id="GO:0043737">
    <property type="term" value="F:deoxyribonuclease V activity"/>
    <property type="evidence" value="ECO:0007669"/>
    <property type="project" value="UniProtKB-UniRule"/>
</dbReference>
<dbReference type="GO" id="GO:0000287">
    <property type="term" value="F:magnesium ion binding"/>
    <property type="evidence" value="ECO:0007669"/>
    <property type="project" value="UniProtKB-UniRule"/>
</dbReference>
<dbReference type="GO" id="GO:0016891">
    <property type="term" value="F:RNA endonuclease activity, producing 5'-phosphomonoesters"/>
    <property type="evidence" value="ECO:0007669"/>
    <property type="project" value="TreeGrafter"/>
</dbReference>
<dbReference type="GO" id="GO:0003727">
    <property type="term" value="F:single-stranded RNA binding"/>
    <property type="evidence" value="ECO:0007669"/>
    <property type="project" value="TreeGrafter"/>
</dbReference>
<dbReference type="GO" id="GO:0006281">
    <property type="term" value="P:DNA repair"/>
    <property type="evidence" value="ECO:0007669"/>
    <property type="project" value="UniProtKB-UniRule"/>
</dbReference>
<dbReference type="CDD" id="cd06559">
    <property type="entry name" value="Endonuclease_V"/>
    <property type="match status" value="1"/>
</dbReference>
<dbReference type="FunFam" id="3.30.2170.10:FF:000001">
    <property type="entry name" value="Endonuclease V"/>
    <property type="match status" value="1"/>
</dbReference>
<dbReference type="Gene3D" id="3.30.2170.10">
    <property type="entry name" value="archaeoglobus fulgidus dsm 4304 superfamily"/>
    <property type="match status" value="1"/>
</dbReference>
<dbReference type="HAMAP" id="MF_00801">
    <property type="entry name" value="Endonuclease_5"/>
    <property type="match status" value="1"/>
</dbReference>
<dbReference type="InterPro" id="IPR007581">
    <property type="entry name" value="Endonuclease-V"/>
</dbReference>
<dbReference type="NCBIfam" id="NF008629">
    <property type="entry name" value="PRK11617.1"/>
    <property type="match status" value="1"/>
</dbReference>
<dbReference type="PANTHER" id="PTHR28511">
    <property type="entry name" value="ENDONUCLEASE V"/>
    <property type="match status" value="1"/>
</dbReference>
<dbReference type="PANTHER" id="PTHR28511:SF1">
    <property type="entry name" value="ENDONUCLEASE V"/>
    <property type="match status" value="1"/>
</dbReference>
<dbReference type="Pfam" id="PF04493">
    <property type="entry name" value="Endonuclease_5"/>
    <property type="match status" value="1"/>
</dbReference>
<accession>B7N2K0</accession>
<sequence length="223" mass="24673">MDLASLRAQQIELASSVIREDRLDKDPPDLIAGADVGFEQGGEVTRAAMVLLKYPSLELVEYKVARIATTMPYIPGFLSFREYPALLAAWEMLSQKPDLVFVDGHGISHPRRLGVASHFGLLVDVPTIGVAKKRLCGKFEPLSSEPGALAPLMDKGEQLAWVWRSKARCNPLFIATGHRVSVDSALAWVQRCMKGYRLPEPTRWADAVASERPAFVRYTANQP</sequence>
<protein>
    <recommendedName>
        <fullName evidence="1">Endonuclease V</fullName>
        <ecNumber evidence="1">3.1.21.7</ecNumber>
    </recommendedName>
    <alternativeName>
        <fullName evidence="1">Deoxyinosine 3'endonuclease</fullName>
    </alternativeName>
    <alternativeName>
        <fullName evidence="1">Deoxyribonuclease V</fullName>
        <shortName evidence="1">DNase V</shortName>
    </alternativeName>
</protein>
<name>NFI_ECO81</name>
<evidence type="ECO:0000255" key="1">
    <source>
        <dbReference type="HAMAP-Rule" id="MF_00801"/>
    </source>
</evidence>
<proteinExistence type="inferred from homology"/>